<accession>P07438</accession>
<accession>Q86YX0</accession>
<name>MT1B_HUMAN</name>
<keyword id="KW-0104">Cadmium</keyword>
<keyword id="KW-0186">Copper</keyword>
<keyword id="KW-0479">Metal-binding</keyword>
<keyword id="KW-0480">Metal-thiolate cluster</keyword>
<keyword id="KW-1267">Proteomics identification</keyword>
<keyword id="KW-1185">Reference proteome</keyword>
<keyword id="KW-0862">Zinc</keyword>
<reference key="1">
    <citation type="journal article" date="1986" name="Mol. Cell. Biol.">
        <title>Structure and tissue-specific expression of the human metallothionein IB gene.</title>
        <authorList>
            <person name="Heguy A."/>
            <person name="West A."/>
            <person name="Richards R.I."/>
            <person name="Karin M."/>
        </authorList>
    </citation>
    <scope>NUCLEOTIDE SEQUENCE [GENOMIC DNA]</scope>
</reference>
<reference key="2">
    <citation type="submission" date="2001-02" db="EMBL/GenBank/DDBJ databases">
        <title>Cloning of a novel member of the human metallothionein gene family-MT1Q.</title>
        <authorList>
            <person name="Wang J."/>
            <person name="Zheng L."/>
            <person name="Yu L."/>
        </authorList>
    </citation>
    <scope>NUCLEOTIDE SEQUENCE [GENOMIC DNA / MRNA]</scope>
</reference>
<reference key="3">
    <citation type="submission" date="2002-10" db="EMBL/GenBank/DDBJ databases">
        <title>Metallothioneins and DNA crosslink damage.</title>
        <authorList>
            <person name="Xie J."/>
            <person name="Jiang F."/>
            <person name="Head D."/>
            <person name="Briggs R."/>
        </authorList>
    </citation>
    <scope>NUCLEOTIDE SEQUENCE [MRNA]</scope>
</reference>
<reference key="4">
    <citation type="journal article" date="2004" name="Genome Res.">
        <title>The status, quality, and expansion of the NIH full-length cDNA project: the Mammalian Gene Collection (MGC).</title>
        <authorList>
            <consortium name="The MGC Project Team"/>
        </authorList>
    </citation>
    <scope>NUCLEOTIDE SEQUENCE [LARGE SCALE MRNA]</scope>
</reference>
<feature type="chain" id="PRO_0000197235" description="Metallothionein-1B">
    <location>
        <begin position="1"/>
        <end position="61"/>
    </location>
</feature>
<feature type="region of interest" description="Beta">
    <location>
        <begin position="1"/>
        <end position="29"/>
    </location>
</feature>
<feature type="region of interest" description="Alpha">
    <location>
        <begin position="30"/>
        <end position="61"/>
    </location>
</feature>
<feature type="binding site" evidence="1">
    <location>
        <position position="5"/>
    </location>
    <ligand>
        <name>a divalent metal cation</name>
        <dbReference type="ChEBI" id="CHEBI:60240"/>
        <label>1</label>
        <note>in cluster B</note>
    </ligand>
</feature>
<feature type="binding site" evidence="1">
    <location>
        <position position="7"/>
    </location>
    <ligand>
        <name>a divalent metal cation</name>
        <dbReference type="ChEBI" id="CHEBI:60240"/>
        <label>1</label>
        <note>in cluster B</note>
    </ligand>
</feature>
<feature type="binding site" evidence="1">
    <location>
        <position position="7"/>
    </location>
    <ligand>
        <name>a divalent metal cation</name>
        <dbReference type="ChEBI" id="CHEBI:60240"/>
        <label>2</label>
        <note>in cluster B</note>
    </ligand>
</feature>
<feature type="binding site" evidence="1">
    <location>
        <position position="13"/>
    </location>
    <ligand>
        <name>a divalent metal cation</name>
        <dbReference type="ChEBI" id="CHEBI:60240"/>
        <label>2</label>
        <note>in cluster B</note>
    </ligand>
</feature>
<feature type="binding site" evidence="1">
    <location>
        <position position="15"/>
    </location>
    <ligand>
        <name>a divalent metal cation</name>
        <dbReference type="ChEBI" id="CHEBI:60240"/>
        <label>2</label>
        <note>in cluster B</note>
    </ligand>
</feature>
<feature type="binding site" evidence="1">
    <location>
        <position position="15"/>
    </location>
    <ligand>
        <name>a divalent metal cation</name>
        <dbReference type="ChEBI" id="CHEBI:60240"/>
        <label>3</label>
        <note>in cluster B</note>
    </ligand>
</feature>
<feature type="binding site" evidence="1">
    <location>
        <position position="19"/>
    </location>
    <ligand>
        <name>a divalent metal cation</name>
        <dbReference type="ChEBI" id="CHEBI:60240"/>
        <label>3</label>
        <note>in cluster B</note>
    </ligand>
</feature>
<feature type="binding site" evidence="1">
    <location>
        <position position="21"/>
    </location>
    <ligand>
        <name>a divalent metal cation</name>
        <dbReference type="ChEBI" id="CHEBI:60240"/>
        <label>1</label>
        <note>in cluster B</note>
    </ligand>
</feature>
<feature type="binding site" evidence="1">
    <location>
        <position position="24"/>
    </location>
    <ligand>
        <name>a divalent metal cation</name>
        <dbReference type="ChEBI" id="CHEBI:60240"/>
        <label>1</label>
        <note>in cluster B</note>
    </ligand>
</feature>
<feature type="binding site" evidence="1">
    <location>
        <position position="24"/>
    </location>
    <ligand>
        <name>a divalent metal cation</name>
        <dbReference type="ChEBI" id="CHEBI:60240"/>
        <label>3</label>
        <note>in cluster B</note>
    </ligand>
</feature>
<feature type="binding site" evidence="1">
    <location>
        <position position="26"/>
    </location>
    <ligand>
        <name>a divalent metal cation</name>
        <dbReference type="ChEBI" id="CHEBI:60240"/>
        <label>2</label>
        <note>in cluster B</note>
    </ligand>
</feature>
<feature type="binding site" evidence="1">
    <location>
        <position position="29"/>
    </location>
    <ligand>
        <name>a divalent metal cation</name>
        <dbReference type="ChEBI" id="CHEBI:60240"/>
        <label>3</label>
        <note>in cluster B</note>
    </ligand>
</feature>
<feature type="binding site" evidence="1">
    <location>
        <position position="33"/>
    </location>
    <ligand>
        <name>a divalent metal cation</name>
        <dbReference type="ChEBI" id="CHEBI:60240"/>
        <label>4</label>
        <note>in cluster A</note>
    </ligand>
</feature>
<feature type="binding site" evidence="1">
    <location>
        <position position="34"/>
    </location>
    <ligand>
        <name>a divalent metal cation</name>
        <dbReference type="ChEBI" id="CHEBI:60240"/>
        <label>4</label>
        <note>in cluster A</note>
    </ligand>
</feature>
<feature type="binding site" evidence="1">
    <location>
        <position position="34"/>
    </location>
    <ligand>
        <name>a divalent metal cation</name>
        <dbReference type="ChEBI" id="CHEBI:60240"/>
        <label>5</label>
        <note>in cluster A</note>
    </ligand>
</feature>
<feature type="binding site" evidence="1">
    <location>
        <position position="36"/>
    </location>
    <ligand>
        <name>a divalent metal cation</name>
        <dbReference type="ChEBI" id="CHEBI:60240"/>
        <label>5</label>
        <note>in cluster A</note>
    </ligand>
</feature>
<feature type="binding site" evidence="1">
    <location>
        <position position="37"/>
    </location>
    <ligand>
        <name>a divalent metal cation</name>
        <dbReference type="ChEBI" id="CHEBI:60240"/>
        <label>5</label>
        <note>in cluster A</note>
    </ligand>
</feature>
<feature type="binding site" evidence="1">
    <location>
        <position position="37"/>
    </location>
    <ligand>
        <name>a divalent metal cation</name>
        <dbReference type="ChEBI" id="CHEBI:60240"/>
        <label>6</label>
        <note>in cluster A</note>
    </ligand>
</feature>
<feature type="binding site" evidence="1">
    <location>
        <position position="41"/>
    </location>
    <ligand>
        <name>a divalent metal cation</name>
        <dbReference type="ChEBI" id="CHEBI:60240"/>
        <label>6</label>
        <note>in cluster A</note>
    </ligand>
</feature>
<feature type="binding site" evidence="1">
    <location>
        <position position="44"/>
    </location>
    <ligand>
        <name>a divalent metal cation</name>
        <dbReference type="ChEBI" id="CHEBI:60240"/>
        <label>4</label>
        <note>in cluster A</note>
    </ligand>
</feature>
<feature type="binding site" evidence="1">
    <location>
        <position position="44"/>
    </location>
    <ligand>
        <name>a divalent metal cation</name>
        <dbReference type="ChEBI" id="CHEBI:60240"/>
        <label>6</label>
        <note>in cluster A</note>
    </ligand>
</feature>
<feature type="binding site" evidence="1">
    <location>
        <position position="48"/>
    </location>
    <ligand>
        <name>a divalent metal cation</name>
        <dbReference type="ChEBI" id="CHEBI:60240"/>
        <label>4</label>
        <note>in cluster A</note>
    </ligand>
</feature>
<feature type="binding site" evidence="1">
    <location>
        <position position="50"/>
    </location>
    <ligand>
        <name>a divalent metal cation</name>
        <dbReference type="ChEBI" id="CHEBI:60240"/>
        <label>5</label>
        <note>in cluster A</note>
    </ligand>
</feature>
<feature type="binding site" evidence="1">
    <location>
        <position position="50"/>
    </location>
    <ligand>
        <name>a divalent metal cation</name>
        <dbReference type="ChEBI" id="CHEBI:60240"/>
        <label>7</label>
        <note>in cluster A</note>
    </ligand>
</feature>
<feature type="binding site" evidence="1">
    <location>
        <position position="57"/>
    </location>
    <ligand>
        <name>a divalent metal cation</name>
        <dbReference type="ChEBI" id="CHEBI:60240"/>
        <label>7</label>
        <note>in cluster A</note>
    </ligand>
</feature>
<feature type="binding site" evidence="1">
    <location>
        <position position="59"/>
    </location>
    <ligand>
        <name>a divalent metal cation</name>
        <dbReference type="ChEBI" id="CHEBI:60240"/>
        <label>7</label>
        <note>in cluster A</note>
    </ligand>
</feature>
<feature type="binding site" evidence="1">
    <location>
        <position position="60"/>
    </location>
    <ligand>
        <name>a divalent metal cation</name>
        <dbReference type="ChEBI" id="CHEBI:60240"/>
        <label>6</label>
        <note>in cluster A</note>
    </ligand>
</feature>
<feature type="binding site" evidence="1">
    <location>
        <position position="60"/>
    </location>
    <ligand>
        <name>a divalent metal cation</name>
        <dbReference type="ChEBI" id="CHEBI:60240"/>
        <label>7</label>
        <note>in cluster A</note>
    </ligand>
</feature>
<proteinExistence type="evidence at protein level"/>
<evidence type="ECO:0000250" key="1">
    <source>
        <dbReference type="UniProtKB" id="P02795"/>
    </source>
</evidence>
<evidence type="ECO:0000305" key="2"/>
<protein>
    <recommendedName>
        <fullName>Metallothionein-1B</fullName>
        <shortName>MT-1B</shortName>
    </recommendedName>
    <alternativeName>
        <fullName>Metallothionein-IB</fullName>
        <shortName>MT-IB</shortName>
    </alternativeName>
</protein>
<dbReference type="EMBL" id="M13485">
    <property type="protein sequence ID" value="AAA36331.1"/>
    <property type="molecule type" value="Genomic_DNA"/>
</dbReference>
<dbReference type="EMBL" id="M13484">
    <property type="protein sequence ID" value="AAA36331.1"/>
    <property type="status" value="JOINED"/>
    <property type="molecule type" value="Genomic_DNA"/>
</dbReference>
<dbReference type="EMBL" id="AF349000">
    <property type="protein sequence ID" value="AAO32960.2"/>
    <property type="molecule type" value="mRNA"/>
</dbReference>
<dbReference type="EMBL" id="AF350250">
    <property type="protein sequence ID" value="AAO49186.1"/>
    <property type="molecule type" value="Genomic_DNA"/>
</dbReference>
<dbReference type="EMBL" id="AY168638">
    <property type="protein sequence ID" value="AAN86984.1"/>
    <property type="molecule type" value="mRNA"/>
</dbReference>
<dbReference type="EMBL" id="BC069421">
    <property type="protein sequence ID" value="AAH69421.1"/>
    <property type="molecule type" value="mRNA"/>
</dbReference>
<dbReference type="EMBL" id="BC137478">
    <property type="protein sequence ID" value="AAI37479.1"/>
    <property type="molecule type" value="mRNA"/>
</dbReference>
<dbReference type="EMBL" id="BC137479">
    <property type="protein sequence ID" value="AAI37480.1"/>
    <property type="molecule type" value="mRNA"/>
</dbReference>
<dbReference type="CCDS" id="CCDS10765.1"/>
<dbReference type="PIR" id="A25244">
    <property type="entry name" value="SMHU1B"/>
</dbReference>
<dbReference type="RefSeq" id="NP_005938.1">
    <property type="nucleotide sequence ID" value="NM_005947.3"/>
</dbReference>
<dbReference type="SMR" id="P07438"/>
<dbReference type="BioGRID" id="110596">
    <property type="interactions" value="5"/>
</dbReference>
<dbReference type="FunCoup" id="P07438">
    <property type="interactions" value="13"/>
</dbReference>
<dbReference type="IntAct" id="P07438">
    <property type="interactions" value="5"/>
</dbReference>
<dbReference type="STRING" id="9606.ENSP00000334998"/>
<dbReference type="DrugBank" id="DB09130">
    <property type="generic name" value="Copper"/>
</dbReference>
<dbReference type="DrugBank" id="DB12965">
    <property type="generic name" value="Silver"/>
</dbReference>
<dbReference type="iPTMnet" id="P07438"/>
<dbReference type="PhosphoSitePlus" id="P07438"/>
<dbReference type="BioMuta" id="MT1B"/>
<dbReference type="jPOST" id="P07438"/>
<dbReference type="MassIVE" id="P07438"/>
<dbReference type="PaxDb" id="9606-ENSP00000334998"/>
<dbReference type="PeptideAtlas" id="P07438"/>
<dbReference type="ProteomicsDB" id="52003"/>
<dbReference type="Antibodypedia" id="76626">
    <property type="antibodies" value="26 antibodies from 5 providers"/>
</dbReference>
<dbReference type="DNASU" id="4490"/>
<dbReference type="Ensembl" id="ENST00000334346.3">
    <property type="protein sequence ID" value="ENSP00000334998.2"/>
    <property type="gene ID" value="ENSG00000169688.11"/>
</dbReference>
<dbReference type="GeneID" id="4490"/>
<dbReference type="KEGG" id="hsa:4490"/>
<dbReference type="MANE-Select" id="ENST00000334346.3">
    <property type="protein sequence ID" value="ENSP00000334998.2"/>
    <property type="RefSeq nucleotide sequence ID" value="NM_005947.3"/>
    <property type="RefSeq protein sequence ID" value="NP_005938.1"/>
</dbReference>
<dbReference type="UCSC" id="uc002ejs.3">
    <property type="organism name" value="human"/>
</dbReference>
<dbReference type="AGR" id="HGNC:7394"/>
<dbReference type="CTD" id="4490"/>
<dbReference type="DisGeNET" id="4490"/>
<dbReference type="GeneCards" id="MT1B"/>
<dbReference type="HGNC" id="HGNC:7394">
    <property type="gene designation" value="MT1B"/>
</dbReference>
<dbReference type="HPA" id="ENSG00000169688">
    <property type="expression patterns" value="Tissue enriched (liver)"/>
</dbReference>
<dbReference type="MIM" id="156349">
    <property type="type" value="gene"/>
</dbReference>
<dbReference type="neXtProt" id="NX_P07438"/>
<dbReference type="OpenTargets" id="ENSG00000169688"/>
<dbReference type="PharmGKB" id="PA31199"/>
<dbReference type="VEuPathDB" id="HostDB:ENSG00000169688"/>
<dbReference type="eggNOG" id="KOG4738">
    <property type="taxonomic scope" value="Eukaryota"/>
</dbReference>
<dbReference type="GeneTree" id="ENSGT00950000182967"/>
<dbReference type="HOGENOM" id="CLU_171204_2_0_1"/>
<dbReference type="InParanoid" id="P07438"/>
<dbReference type="OMA" id="CECKCTF"/>
<dbReference type="PAN-GO" id="P07438">
    <property type="GO annotations" value="8 GO annotations based on evolutionary models"/>
</dbReference>
<dbReference type="TreeFam" id="TF336054"/>
<dbReference type="PathwayCommons" id="P07438"/>
<dbReference type="Reactome" id="R-HSA-5661231">
    <property type="pathway name" value="Metallothioneins bind metals"/>
</dbReference>
<dbReference type="SignaLink" id="P07438"/>
<dbReference type="BioGRID-ORCS" id="4490">
    <property type="hits" value="124 hits in 1067 CRISPR screens"/>
</dbReference>
<dbReference type="GeneWiki" id="MT1B"/>
<dbReference type="GenomeRNAi" id="4490"/>
<dbReference type="Pharos" id="P07438">
    <property type="development level" value="Tbio"/>
</dbReference>
<dbReference type="PRO" id="PR:P07438"/>
<dbReference type="Proteomes" id="UP000005640">
    <property type="component" value="Chromosome 16"/>
</dbReference>
<dbReference type="RNAct" id="P07438">
    <property type="molecule type" value="protein"/>
</dbReference>
<dbReference type="Bgee" id="ENSG00000169688">
    <property type="expression patterns" value="Expressed in right lobe of liver and 63 other cell types or tissues"/>
</dbReference>
<dbReference type="ExpressionAtlas" id="P07438">
    <property type="expression patterns" value="baseline and differential"/>
</dbReference>
<dbReference type="GO" id="GO:0005737">
    <property type="term" value="C:cytoplasm"/>
    <property type="evidence" value="ECO:0000250"/>
    <property type="project" value="UniProtKB"/>
</dbReference>
<dbReference type="GO" id="GO:0005634">
    <property type="term" value="C:nucleus"/>
    <property type="evidence" value="ECO:0000250"/>
    <property type="project" value="UniProtKB"/>
</dbReference>
<dbReference type="GO" id="GO:0046872">
    <property type="term" value="F:metal ion binding"/>
    <property type="evidence" value="ECO:0000318"/>
    <property type="project" value="GO_Central"/>
</dbReference>
<dbReference type="GO" id="GO:0008270">
    <property type="term" value="F:zinc ion binding"/>
    <property type="evidence" value="ECO:0000250"/>
    <property type="project" value="UniProtKB"/>
</dbReference>
<dbReference type="GO" id="GO:0071276">
    <property type="term" value="P:cellular response to cadmium ion"/>
    <property type="evidence" value="ECO:0000318"/>
    <property type="project" value="GO_Central"/>
</dbReference>
<dbReference type="GO" id="GO:0071280">
    <property type="term" value="P:cellular response to copper ion"/>
    <property type="evidence" value="ECO:0000318"/>
    <property type="project" value="GO_Central"/>
</dbReference>
<dbReference type="GO" id="GO:0071294">
    <property type="term" value="P:cellular response to zinc ion"/>
    <property type="evidence" value="ECO:0000270"/>
    <property type="project" value="UniProtKB"/>
</dbReference>
<dbReference type="GO" id="GO:0010273">
    <property type="term" value="P:detoxification of copper ion"/>
    <property type="evidence" value="ECO:0000318"/>
    <property type="project" value="GO_Central"/>
</dbReference>
<dbReference type="GO" id="GO:0006882">
    <property type="term" value="P:intracellular zinc ion homeostasis"/>
    <property type="evidence" value="ECO:0000318"/>
    <property type="project" value="GO_Central"/>
</dbReference>
<dbReference type="GO" id="GO:0045926">
    <property type="term" value="P:negative regulation of growth"/>
    <property type="evidence" value="ECO:0000250"/>
    <property type="project" value="UniProtKB"/>
</dbReference>
<dbReference type="FunFam" id="4.10.10.10:FF:000001">
    <property type="entry name" value="Metallothionein"/>
    <property type="match status" value="1"/>
</dbReference>
<dbReference type="Gene3D" id="4.10.10.10">
    <property type="entry name" value="Metallothionein Isoform II"/>
    <property type="match status" value="1"/>
</dbReference>
<dbReference type="InterPro" id="IPR017854">
    <property type="entry name" value="Metalthion_dom_sf"/>
</dbReference>
<dbReference type="InterPro" id="IPR023587">
    <property type="entry name" value="Metalthion_dom_sf_vert"/>
</dbReference>
<dbReference type="InterPro" id="IPR000006">
    <property type="entry name" value="Metalthion_vert"/>
</dbReference>
<dbReference type="InterPro" id="IPR018064">
    <property type="entry name" value="Metalthion_vert_metal_BS"/>
</dbReference>
<dbReference type="PANTHER" id="PTHR23299">
    <property type="entry name" value="METALLOTHIONEIN"/>
    <property type="match status" value="1"/>
</dbReference>
<dbReference type="PANTHER" id="PTHR23299:SF51">
    <property type="entry name" value="METALLOTHIONEIN-1B"/>
    <property type="match status" value="1"/>
</dbReference>
<dbReference type="Pfam" id="PF00131">
    <property type="entry name" value="Metallothio"/>
    <property type="match status" value="1"/>
</dbReference>
<dbReference type="PRINTS" id="PR00860">
    <property type="entry name" value="MTVERTEBRATE"/>
</dbReference>
<dbReference type="SUPFAM" id="SSF57868">
    <property type="entry name" value="Metallothionein"/>
    <property type="match status" value="1"/>
</dbReference>
<dbReference type="PROSITE" id="PS00203">
    <property type="entry name" value="METALLOTHIONEIN_VRT"/>
    <property type="match status" value="1"/>
</dbReference>
<organism>
    <name type="scientific">Homo sapiens</name>
    <name type="common">Human</name>
    <dbReference type="NCBI Taxonomy" id="9606"/>
    <lineage>
        <taxon>Eukaryota</taxon>
        <taxon>Metazoa</taxon>
        <taxon>Chordata</taxon>
        <taxon>Craniata</taxon>
        <taxon>Vertebrata</taxon>
        <taxon>Euteleostomi</taxon>
        <taxon>Mammalia</taxon>
        <taxon>Eutheria</taxon>
        <taxon>Euarchontoglires</taxon>
        <taxon>Primates</taxon>
        <taxon>Haplorrhini</taxon>
        <taxon>Catarrhini</taxon>
        <taxon>Hominidae</taxon>
        <taxon>Homo</taxon>
    </lineage>
</organism>
<sequence length="61" mass="6115">MDPNCSCTTGGSCACAGSCKCKECKCTSCKKCCCSCCPVGCAKCAQGCVCKGSSEKCRCCA</sequence>
<gene>
    <name type="primary">MT1B</name>
    <name type="synonym">MT1Q</name>
</gene>
<comment type="function">
    <text>Metallothioneins have a high content of cysteine residues that bind various heavy metals; these proteins are transcriptionally regulated by both heavy metals and glucocorticoids.</text>
</comment>
<comment type="subunit">
    <text>Monomer.</text>
</comment>
<comment type="interaction">
    <interactant intactId="EBI-12015462">
        <id>P07438</id>
    </interactant>
    <interactant intactId="EBI-11959885">
        <id>Q07627</id>
        <label>KRTAP1-1</label>
    </interactant>
    <organismsDiffer>false</organismsDiffer>
    <experiments>3</experiments>
</comment>
<comment type="interaction">
    <interactant intactId="EBI-12015462">
        <id>P07438</id>
    </interactant>
    <interactant intactId="EBI-12012928">
        <id>P60371</id>
        <label>KRTAP10-6</label>
    </interactant>
    <organismsDiffer>false</organismsDiffer>
    <experiments>3</experiments>
</comment>
<comment type="interaction">
    <interactant intactId="EBI-12015462">
        <id>P07438</id>
    </interactant>
    <interactant intactId="EBI-11988175">
        <id>Q9BYP8</id>
        <label>KRTAP17-1</label>
    </interactant>
    <organismsDiffer>false</organismsDiffer>
    <experiments>3</experiments>
</comment>
<comment type="interaction">
    <interactant intactId="EBI-12015462">
        <id>P07438</id>
    </interactant>
    <interactant intactId="EBI-11958178">
        <id>Q701N4</id>
        <label>KRTAP5-2</label>
    </interactant>
    <organismsDiffer>false</organismsDiffer>
    <experiments>3</experiments>
</comment>
<comment type="interaction">
    <interactant intactId="EBI-12015462">
        <id>P07438</id>
    </interactant>
    <interactant intactId="EBI-750494">
        <id>P49901</id>
        <label>SMCP</label>
    </interactant>
    <organismsDiffer>false</organismsDiffer>
    <experiments>3</experiments>
</comment>
<comment type="domain">
    <text>Class I metallothioneins contain 2 metal-binding domains: four divalent ions are chelated within cluster A of the alpha domain and are coordinated via cysteinyl thiolate bridges to 11 cysteine ligands. Cluster B, the corresponding region within the beta domain, can ligate three divalent ions to 9 cysteines.</text>
</comment>
<comment type="similarity">
    <text evidence="2">Belongs to the metallothionein superfamily. Type 1 family.</text>
</comment>